<comment type="function">
    <text>Transcriptional activator of the thermally regulated virulent yopE gene. LcrF activity could be modulated by the interaction with an inducer molecule serving as a temperature messenger. The availability of the messenger would in turn be controlled by a temperature-responsive process serving as a cellular thermometer.</text>
</comment>
<feature type="chain" id="PRO_0000194529" description="Thermoregulatory protein LcrF">
    <location>
        <begin position="1"/>
        <end position="271"/>
    </location>
</feature>
<feature type="domain" description="HTH araC/xylS-type" evidence="1">
    <location>
        <begin position="167"/>
        <end position="265"/>
    </location>
</feature>
<feature type="DNA-binding region" description="H-T-H motif" evidence="1">
    <location>
        <begin position="184"/>
        <end position="205"/>
    </location>
</feature>
<feature type="DNA-binding region" description="H-T-H motif" evidence="1">
    <location>
        <begin position="232"/>
        <end position="255"/>
    </location>
</feature>
<accession>P28808</accession>
<name>LCRF_YERPE</name>
<gene>
    <name type="primary">lcrF</name>
    <name type="synonym">virF</name>
    <name type="ordered locus">YPCD1.49</name>
    <name type="ordered locus">y5029</name>
    <name type="ordered locus">y0032</name>
    <name type="ordered locus">YP_pCD34</name>
</gene>
<protein>
    <recommendedName>
        <fullName>Thermoregulatory protein LcrF</fullName>
    </recommendedName>
</protein>
<evidence type="ECO:0000255" key="1">
    <source>
        <dbReference type="PROSITE-ProRule" id="PRU00593"/>
    </source>
</evidence>
<keyword id="KW-0010">Activator</keyword>
<keyword id="KW-0238">DNA-binding</keyword>
<keyword id="KW-0614">Plasmid</keyword>
<keyword id="KW-1185">Reference proteome</keyword>
<keyword id="KW-0804">Transcription</keyword>
<keyword id="KW-0805">Transcription regulation</keyword>
<keyword id="KW-0843">Virulence</keyword>
<organism>
    <name type="scientific">Yersinia pestis</name>
    <dbReference type="NCBI Taxonomy" id="632"/>
    <lineage>
        <taxon>Bacteria</taxon>
        <taxon>Pseudomonadati</taxon>
        <taxon>Pseudomonadota</taxon>
        <taxon>Gammaproteobacteria</taxon>
        <taxon>Enterobacterales</taxon>
        <taxon>Yersiniaceae</taxon>
        <taxon>Yersinia</taxon>
    </lineage>
</organism>
<dbReference type="EMBL" id="M86690">
    <property type="protein sequence ID" value="AAA25558.1"/>
    <property type="molecule type" value="Genomic_DNA"/>
</dbReference>
<dbReference type="EMBL" id="AF074612">
    <property type="protein sequence ID" value="AAC69782.1"/>
    <property type="molecule type" value="Genomic_DNA"/>
</dbReference>
<dbReference type="EMBL" id="AF053946">
    <property type="protein sequence ID" value="AAC62554.1"/>
    <property type="molecule type" value="Genomic_DNA"/>
</dbReference>
<dbReference type="EMBL" id="AL117189">
    <property type="protein sequence ID" value="CAB54926.1"/>
    <property type="molecule type" value="Genomic_DNA"/>
</dbReference>
<dbReference type="EMBL" id="AE017043">
    <property type="protein sequence ID" value="AAS58553.1"/>
    <property type="molecule type" value="Genomic_DNA"/>
</dbReference>
<dbReference type="PIR" id="A42884">
    <property type="entry name" value="A42884"/>
</dbReference>
<dbReference type="RefSeq" id="NP_395183.1">
    <property type="nucleotide sequence ID" value="NC_003131.1"/>
</dbReference>
<dbReference type="RefSeq" id="NP_857733.1">
    <property type="nucleotide sequence ID" value="NC_004836.1"/>
</dbReference>
<dbReference type="RefSeq" id="NP_857928.1">
    <property type="nucleotide sequence ID" value="NC_004839.1"/>
</dbReference>
<dbReference type="RefSeq" id="WP_002212931.1">
    <property type="nucleotide sequence ID" value="NZ_WUCM01000070.1"/>
</dbReference>
<dbReference type="SMR" id="P28808"/>
<dbReference type="IntAct" id="P28808">
    <property type="interactions" value="4"/>
</dbReference>
<dbReference type="MINT" id="P28808"/>
<dbReference type="PaxDb" id="214092-5832469"/>
<dbReference type="DNASU" id="1149292"/>
<dbReference type="EnsemblBacteria" id="AAS58553">
    <property type="protein sequence ID" value="AAS58553"/>
    <property type="gene ID" value="YP_pCD34"/>
</dbReference>
<dbReference type="KEGG" id="ype:YPCD1.49"/>
<dbReference type="KEGG" id="ypm:YP_pCD34"/>
<dbReference type="PATRIC" id="fig|1028802.3.peg.971"/>
<dbReference type="eggNOG" id="COG2207">
    <property type="taxonomic scope" value="Bacteria"/>
</dbReference>
<dbReference type="HOGENOM" id="CLU_073843_2_0_6"/>
<dbReference type="OMA" id="ISMEAGF"/>
<dbReference type="OrthoDB" id="9809338at2"/>
<dbReference type="Proteomes" id="UP000000815">
    <property type="component" value="Plasmid pCD1"/>
</dbReference>
<dbReference type="Proteomes" id="UP000001019">
    <property type="component" value="Plasmid pCD1"/>
</dbReference>
<dbReference type="GO" id="GO:0003700">
    <property type="term" value="F:DNA-binding transcription factor activity"/>
    <property type="evidence" value="ECO:0007669"/>
    <property type="project" value="InterPro"/>
</dbReference>
<dbReference type="GO" id="GO:0043565">
    <property type="term" value="F:sequence-specific DNA binding"/>
    <property type="evidence" value="ECO:0007669"/>
    <property type="project" value="InterPro"/>
</dbReference>
<dbReference type="GO" id="GO:0006355">
    <property type="term" value="P:regulation of DNA-templated transcription"/>
    <property type="evidence" value="ECO:0000315"/>
    <property type="project" value="CACAO"/>
</dbReference>
<dbReference type="Gene3D" id="1.10.10.60">
    <property type="entry name" value="Homeodomain-like"/>
    <property type="match status" value="1"/>
</dbReference>
<dbReference type="InterPro" id="IPR050204">
    <property type="entry name" value="AraC_XylS_family_regulators"/>
</dbReference>
<dbReference type="InterPro" id="IPR054015">
    <property type="entry name" value="ExsA-like_N"/>
</dbReference>
<dbReference type="InterPro" id="IPR009057">
    <property type="entry name" value="Homeodomain-like_sf"/>
</dbReference>
<dbReference type="InterPro" id="IPR037923">
    <property type="entry name" value="HTH-like"/>
</dbReference>
<dbReference type="InterPro" id="IPR018060">
    <property type="entry name" value="HTH_AraC"/>
</dbReference>
<dbReference type="InterPro" id="IPR018062">
    <property type="entry name" value="HTH_AraC-typ_CS"/>
</dbReference>
<dbReference type="InterPro" id="IPR020449">
    <property type="entry name" value="Tscrpt_reg_AraC-type_HTH"/>
</dbReference>
<dbReference type="PANTHER" id="PTHR46796:SF6">
    <property type="entry name" value="ARAC SUBFAMILY"/>
    <property type="match status" value="1"/>
</dbReference>
<dbReference type="PANTHER" id="PTHR46796">
    <property type="entry name" value="HTH-TYPE TRANSCRIPTIONAL ACTIVATOR RHAS-RELATED"/>
    <property type="match status" value="1"/>
</dbReference>
<dbReference type="Pfam" id="PF22200">
    <property type="entry name" value="ExsA_N"/>
    <property type="match status" value="1"/>
</dbReference>
<dbReference type="Pfam" id="PF12833">
    <property type="entry name" value="HTH_18"/>
    <property type="match status" value="1"/>
</dbReference>
<dbReference type="PRINTS" id="PR00032">
    <property type="entry name" value="HTHARAC"/>
</dbReference>
<dbReference type="SMART" id="SM00342">
    <property type="entry name" value="HTH_ARAC"/>
    <property type="match status" value="1"/>
</dbReference>
<dbReference type="SUPFAM" id="SSF46689">
    <property type="entry name" value="Homeodomain-like"/>
    <property type="match status" value="1"/>
</dbReference>
<dbReference type="SUPFAM" id="SSF51215">
    <property type="entry name" value="Regulatory protein AraC"/>
    <property type="match status" value="1"/>
</dbReference>
<dbReference type="PROSITE" id="PS00041">
    <property type="entry name" value="HTH_ARAC_FAMILY_1"/>
    <property type="match status" value="1"/>
</dbReference>
<dbReference type="PROSITE" id="PS01124">
    <property type="entry name" value="HTH_ARAC_FAMILY_2"/>
    <property type="match status" value="1"/>
</dbReference>
<sequence length="271" mass="30833">MASLEIIKLEWVTPIFKVVEHSQDGLYILLQGQISWQSSGQTYDLDEGNMLFLRRGSYAVRCGTKEPCQLLWIPLPGSFLSTFLHRFGSLLSEIGRDNSTPKPLLIFNISPILSQSIQNLCAILERSDFPSVLTQLRIEELLLLLAFSSQGTLFLSALRHLGNRPEERLQKFMEENYLQGWKLSKFAREFGMGLTTFKELFGTVYGISPRAWISERRILYAHQLLLNGKMSIVDIAMEAGFSSQSYFTQSYRRRFGCTPSQARLTKIATTG</sequence>
<geneLocation type="plasmid">
    <name>pCD1</name>
</geneLocation>
<reference key="1">
    <citation type="journal article" date="1992" name="J. Bacteriol.">
        <title>Temperature sensing in Yersinia pestis: regulation of yopE transcription by lcrF.</title>
        <authorList>
            <person name="Goguen J.D."/>
            <person name="Minion C."/>
            <person name="Hoe N.P."/>
        </authorList>
    </citation>
    <scope>NUCLEOTIDE SEQUENCE [GENOMIC DNA]</scope>
</reference>
<reference key="2">
    <citation type="journal article" date="1998" name="Infect. Immun.">
        <title>DNA sequencing and analysis of the low-Ca2+-response plasmid pCD1 of Yersinia pestis KIM5.</title>
        <authorList>
            <person name="Perry R.D."/>
            <person name="Straley S.C."/>
            <person name="Fetherston J.D."/>
            <person name="Rose D.J."/>
            <person name="Gregor J."/>
            <person name="Blattner F.R."/>
        </authorList>
    </citation>
    <scope>NUCLEOTIDE SEQUENCE [GENOMIC DNA]</scope>
    <source>
        <strain>KIM5 / Biovar Mediaevalis</strain>
    </source>
</reference>
<reference key="3">
    <citation type="journal article" date="1998" name="J. Bacteriol.">
        <title>Structural organization of virulence-associated plasmids of Yersinia pestis.</title>
        <authorList>
            <person name="Hu P."/>
            <person name="Elliott J."/>
            <person name="McCready P."/>
            <person name="Skowronski E."/>
            <person name="Garnes J."/>
            <person name="Kobayashi A."/>
            <person name="Brubaker R.R."/>
            <person name="Garcia E."/>
        </authorList>
    </citation>
    <scope>NUCLEOTIDE SEQUENCE [GENOMIC DNA]</scope>
    <source>
        <strain>KIM5 / Biovar Mediaevalis</strain>
    </source>
</reference>
<reference key="4">
    <citation type="journal article" date="2001" name="Nature">
        <title>Genome sequence of Yersinia pestis, the causative agent of plague.</title>
        <authorList>
            <person name="Parkhill J."/>
            <person name="Wren B.W."/>
            <person name="Thomson N.R."/>
            <person name="Titball R.W."/>
            <person name="Holden M.T.G."/>
            <person name="Prentice M.B."/>
            <person name="Sebaihia M."/>
            <person name="James K.D."/>
            <person name="Churcher C.M."/>
            <person name="Mungall K.L."/>
            <person name="Baker S."/>
            <person name="Basham D."/>
            <person name="Bentley S.D."/>
            <person name="Brooks K."/>
            <person name="Cerdeno-Tarraga A.-M."/>
            <person name="Chillingworth T."/>
            <person name="Cronin A."/>
            <person name="Davies R.M."/>
            <person name="Davis P."/>
            <person name="Dougan G."/>
            <person name="Feltwell T."/>
            <person name="Hamlin N."/>
            <person name="Holroyd S."/>
            <person name="Jagels K."/>
            <person name="Karlyshev A.V."/>
            <person name="Leather S."/>
            <person name="Moule S."/>
            <person name="Oyston P.C.F."/>
            <person name="Quail M.A."/>
            <person name="Rutherford K.M."/>
            <person name="Simmonds M."/>
            <person name="Skelton J."/>
            <person name="Stevens K."/>
            <person name="Whitehead S."/>
            <person name="Barrell B.G."/>
        </authorList>
    </citation>
    <scope>NUCLEOTIDE SEQUENCE [LARGE SCALE GENOMIC DNA]</scope>
    <source>
        <strain>CO-92 / Biovar Orientalis</strain>
    </source>
</reference>
<reference key="5">
    <citation type="journal article" date="2004" name="DNA Res.">
        <title>Complete genome sequence of Yersinia pestis strain 91001, an isolate avirulent to humans.</title>
        <authorList>
            <person name="Song Y."/>
            <person name="Tong Z."/>
            <person name="Wang J."/>
            <person name="Wang L."/>
            <person name="Guo Z."/>
            <person name="Han Y."/>
            <person name="Zhang J."/>
            <person name="Pei D."/>
            <person name="Zhou D."/>
            <person name="Qin H."/>
            <person name="Pang X."/>
            <person name="Han Y."/>
            <person name="Zhai J."/>
            <person name="Li M."/>
            <person name="Cui B."/>
            <person name="Qi Z."/>
            <person name="Jin L."/>
            <person name="Dai R."/>
            <person name="Chen F."/>
            <person name="Li S."/>
            <person name="Ye C."/>
            <person name="Du Z."/>
            <person name="Lin W."/>
            <person name="Wang J."/>
            <person name="Yu J."/>
            <person name="Yang H."/>
            <person name="Wang J."/>
            <person name="Huang P."/>
            <person name="Yang R."/>
        </authorList>
    </citation>
    <scope>NUCLEOTIDE SEQUENCE [LARGE SCALE GENOMIC DNA]</scope>
    <source>
        <strain>91001 / Biovar Mediaevalis</strain>
    </source>
</reference>
<proteinExistence type="predicted"/>